<sequence length="242" mass="26421">MAAATRSCRPWGSLLGLIWLVSAAAASWDLSSLRCNFGSFCECDFQPDFQGLECDLAQHLAGQHLARSLVVKALKAFLQDPAPTKPLVLSLHGWTGTGKSYVSSLLAHYLFRDGLRSPHVHHFSPVIHFPHPSHLERYKKDLKSWVQGNLTVCSRSLFLFDEMDKLAPGLIEVLRPFLGSSWVVYGTNYRKAIFIFIRWLLALGHHGRASPGRSGALPATPAAPRAALCAQRAGPSGPGAQG</sequence>
<accession>P0C7W1</accession>
<reference key="1">
    <citation type="submission" date="2008-02" db="EMBL/GenBank/DDBJ databases">
        <authorList>
            <consortium name="NIH - Mammalian Gene Collection (MGC) project"/>
        </authorList>
    </citation>
    <scope>NUCLEOTIDE SEQUENCE [LARGE SCALE MRNA]</scope>
    <source>
        <strain>Hereford</strain>
        <tissue>Thymus</tissue>
    </source>
</reference>
<feature type="signal peptide" evidence="2">
    <location>
        <begin position="1"/>
        <end position="26"/>
    </location>
</feature>
<feature type="chain" id="PRO_0000345611" description="Prosalusin">
    <location>
        <begin position="27"/>
        <end position="242"/>
    </location>
</feature>
<feature type="propeptide" id="PRO_0000345610" evidence="2">
    <location>
        <begin position="27"/>
        <end position="189"/>
    </location>
</feature>
<feature type="peptide" id="PRO_0000345612" description="Salusin-beta" evidence="1">
    <location>
        <begin position="192"/>
        <end position="211"/>
    </location>
</feature>
<feature type="peptide" id="PRO_0000345613" description="Salusin-alpha" evidence="1">
    <location>
        <begin position="214"/>
        <end position="241"/>
    </location>
</feature>
<feature type="binding site" evidence="2">
    <location>
        <begin position="93"/>
        <end position="100"/>
    </location>
    <ligand>
        <name>ATP</name>
        <dbReference type="ChEBI" id="CHEBI:30616"/>
    </ligand>
</feature>
<feature type="glycosylation site" description="N-linked (GlcNAc...) asparagine" evidence="2">
    <location>
        <position position="149"/>
    </location>
</feature>
<proteinExistence type="inferred from homology"/>
<name>TOR2X_BOVIN</name>
<dbReference type="EMBL" id="AAFC03079547">
    <property type="status" value="NOT_ANNOTATED_CDS"/>
    <property type="molecule type" value="Genomic_DNA"/>
</dbReference>
<dbReference type="RefSeq" id="XP_005213359.1">
    <molecule id="P0C7W1-1"/>
    <property type="nucleotide sequence ID" value="XM_005213302.5"/>
</dbReference>
<dbReference type="SMR" id="P0C7W1"/>
<dbReference type="GlyCosmos" id="P0C7W1">
    <property type="glycosylation" value="1 site, No reported glycans"/>
</dbReference>
<dbReference type="GlyGen" id="P0C7W1">
    <property type="glycosylation" value="1 site"/>
</dbReference>
<dbReference type="Ensembl" id="ENSBTAT00000110988.1">
    <molecule id="P0C7W1-1"/>
    <property type="protein sequence ID" value="ENSBTAP00000080721.1"/>
    <property type="gene ID" value="ENSBTAG00000013510.6"/>
</dbReference>
<dbReference type="GeneID" id="534311"/>
<dbReference type="CTD" id="27433"/>
<dbReference type="GeneTree" id="ENSGT00950000182888"/>
<dbReference type="InParanoid" id="P0C7W1"/>
<dbReference type="OrthoDB" id="19623at2759"/>
<dbReference type="Proteomes" id="UP000009136">
    <property type="component" value="Chromosome 11"/>
</dbReference>
<dbReference type="GO" id="GO:0005788">
    <property type="term" value="C:endoplasmic reticulum lumen"/>
    <property type="evidence" value="ECO:0000318"/>
    <property type="project" value="GO_Central"/>
</dbReference>
<dbReference type="GO" id="GO:0005576">
    <property type="term" value="C:extracellular region"/>
    <property type="evidence" value="ECO:0007669"/>
    <property type="project" value="UniProtKB-SubCell"/>
</dbReference>
<dbReference type="GO" id="GO:0005635">
    <property type="term" value="C:nuclear envelope"/>
    <property type="evidence" value="ECO:0000318"/>
    <property type="project" value="GO_Central"/>
</dbReference>
<dbReference type="GO" id="GO:0005524">
    <property type="term" value="F:ATP binding"/>
    <property type="evidence" value="ECO:0007669"/>
    <property type="project" value="UniProtKB-KW"/>
</dbReference>
<dbReference type="GO" id="GO:0016887">
    <property type="term" value="F:ATP hydrolysis activity"/>
    <property type="evidence" value="ECO:0007669"/>
    <property type="project" value="InterPro"/>
</dbReference>
<dbReference type="GO" id="GO:0005179">
    <property type="term" value="F:hormone activity"/>
    <property type="evidence" value="ECO:0007669"/>
    <property type="project" value="UniProtKB-KW"/>
</dbReference>
<dbReference type="FunFam" id="3.40.50.300:FF:001014">
    <property type="entry name" value="Torsin"/>
    <property type="match status" value="1"/>
</dbReference>
<dbReference type="Gene3D" id="3.40.50.300">
    <property type="entry name" value="P-loop containing nucleotide triphosphate hydrolases"/>
    <property type="match status" value="1"/>
</dbReference>
<dbReference type="InterPro" id="IPR027417">
    <property type="entry name" value="P-loop_NTPase"/>
</dbReference>
<dbReference type="InterPro" id="IPR010448">
    <property type="entry name" value="Torsin"/>
</dbReference>
<dbReference type="PANTHER" id="PTHR10760">
    <property type="entry name" value="TORSIN"/>
    <property type="match status" value="1"/>
</dbReference>
<dbReference type="PANTHER" id="PTHR10760:SF4">
    <property type="entry name" value="TORSIN-2A"/>
    <property type="match status" value="1"/>
</dbReference>
<dbReference type="Pfam" id="PF06309">
    <property type="entry name" value="Torsin"/>
    <property type="match status" value="1"/>
</dbReference>
<dbReference type="SUPFAM" id="SSF52540">
    <property type="entry name" value="P-loop containing nucleoside triphosphate hydrolases"/>
    <property type="match status" value="1"/>
</dbReference>
<protein>
    <recommendedName>
        <fullName>Prosalusin</fullName>
    </recommendedName>
    <alternativeName>
        <fullName>Torsin family 2 member A</fullName>
    </alternativeName>
    <alternativeName>
        <fullName>Torsin-2A</fullName>
    </alternativeName>
    <component>
        <recommendedName>
            <fullName>Salusin-alpha</fullName>
        </recommendedName>
    </component>
    <component>
        <recommendedName>
            <fullName>Salusin-beta</fullName>
        </recommendedName>
    </component>
</protein>
<organism>
    <name type="scientific">Bos taurus</name>
    <name type="common">Bovine</name>
    <dbReference type="NCBI Taxonomy" id="9913"/>
    <lineage>
        <taxon>Eukaryota</taxon>
        <taxon>Metazoa</taxon>
        <taxon>Chordata</taxon>
        <taxon>Craniata</taxon>
        <taxon>Vertebrata</taxon>
        <taxon>Euteleostomi</taxon>
        <taxon>Mammalia</taxon>
        <taxon>Eutheria</taxon>
        <taxon>Laurasiatheria</taxon>
        <taxon>Artiodactyla</taxon>
        <taxon>Ruminantia</taxon>
        <taxon>Pecora</taxon>
        <taxon>Bovidae</taxon>
        <taxon>Bovinae</taxon>
        <taxon>Bos</taxon>
    </lineage>
</organism>
<gene>
    <name type="primary">TOR2A</name>
</gene>
<evidence type="ECO:0000250" key="1"/>
<evidence type="ECO:0000255" key="2"/>
<evidence type="ECO:0000305" key="3"/>
<comment type="function">
    <text evidence="1">Salusin may be a endocrine and/or paracrine factor able to increase intracellular calcium concentrations and induce cell mitogenesis. Salusin may also be a potent hypotensive peptide (By similarity).</text>
</comment>
<comment type="subcellular location">
    <subcellularLocation>
        <location evidence="1">Secreted</location>
    </subcellularLocation>
</comment>
<comment type="alternative products">
    <event type="alternative splicing"/>
    <isoform>
        <id>P0C7W1-1</id>
        <name>2</name>
        <name>Prosalusin</name>
        <sequence type="displayed"/>
    </isoform>
    <isoform>
        <id>A4FUH1-1</id>
        <name>1</name>
        <sequence type="external"/>
    </isoform>
</comment>
<comment type="miscellaneous">
    <molecule>Isoform 2</molecule>
    <text>Salusin-beta peptide is derived from isoform 2.</text>
</comment>
<comment type="similarity">
    <text evidence="3">Belongs to the ClpA/ClpB family. Torsin subfamily.</text>
</comment>
<keyword id="KW-0025">Alternative splicing</keyword>
<keyword id="KW-0067">ATP-binding</keyword>
<keyword id="KW-0165">Cleavage on pair of basic residues</keyword>
<keyword id="KW-0325">Glycoprotein</keyword>
<keyword id="KW-0372">Hormone</keyword>
<keyword id="KW-0547">Nucleotide-binding</keyword>
<keyword id="KW-1185">Reference proteome</keyword>
<keyword id="KW-0964">Secreted</keyword>
<keyword id="KW-0732">Signal</keyword>